<protein>
    <recommendedName>
        <fullName>Putative ABC transporter ATP-binding protein MG065 homolog</fullName>
    </recommendedName>
</protein>
<reference key="1">
    <citation type="journal article" date="1996" name="Nucleic Acids Res.">
        <title>Complete sequence analysis of the genome of the bacterium Mycoplasma pneumoniae.</title>
        <authorList>
            <person name="Himmelreich R."/>
            <person name="Hilbert H."/>
            <person name="Plagens H."/>
            <person name="Pirkl E."/>
            <person name="Li B.-C."/>
            <person name="Herrmann R."/>
        </authorList>
    </citation>
    <scope>NUCLEOTIDE SEQUENCE [LARGE SCALE GENOMIC DNA]</scope>
    <source>
        <strain>ATCC 29342 / M129 / Subtype 1</strain>
    </source>
</reference>
<organism>
    <name type="scientific">Mycoplasma pneumoniae (strain ATCC 29342 / M129 / Subtype 1)</name>
    <name type="common">Mycoplasmoides pneumoniae</name>
    <dbReference type="NCBI Taxonomy" id="272634"/>
    <lineage>
        <taxon>Bacteria</taxon>
        <taxon>Bacillati</taxon>
        <taxon>Mycoplasmatota</taxon>
        <taxon>Mycoplasmoidales</taxon>
        <taxon>Mycoplasmoidaceae</taxon>
        <taxon>Mycoplasmoides</taxon>
    </lineage>
</organism>
<comment type="similarity">
    <text evidence="2">Belongs to the ABC transporter superfamily.</text>
</comment>
<keyword id="KW-0067">ATP-binding</keyword>
<keyword id="KW-0547">Nucleotide-binding</keyword>
<keyword id="KW-1185">Reference proteome</keyword>
<keyword id="KW-0813">Transport</keyword>
<name>Y081_MYCPN</name>
<proteinExistence type="inferred from homology"/>
<gene>
    <name type="ordered locus">MPN_081</name>
    <name type="ORF">MP074</name>
    <name type="ORF">R02_orf465</name>
</gene>
<dbReference type="EMBL" id="U00089">
    <property type="protein sequence ID" value="AAB95722.1"/>
    <property type="molecule type" value="Genomic_DNA"/>
</dbReference>
<dbReference type="PIR" id="S73400">
    <property type="entry name" value="S73400"/>
</dbReference>
<dbReference type="RefSeq" id="NP_109769.1">
    <property type="nucleotide sequence ID" value="NC_000912.1"/>
</dbReference>
<dbReference type="RefSeq" id="WP_010874438.1">
    <property type="nucleotide sequence ID" value="NZ_OU342337.1"/>
</dbReference>
<dbReference type="SMR" id="P75612"/>
<dbReference type="IntAct" id="P75612">
    <property type="interactions" value="2"/>
</dbReference>
<dbReference type="STRING" id="272634.MPN_081"/>
<dbReference type="EnsemblBacteria" id="AAB95722">
    <property type="protein sequence ID" value="AAB95722"/>
    <property type="gene ID" value="MPN_081"/>
</dbReference>
<dbReference type="KEGG" id="mpn:MPN_081"/>
<dbReference type="PATRIC" id="fig|272634.6.peg.83"/>
<dbReference type="HOGENOM" id="CLU_046843_0_0_14"/>
<dbReference type="OrthoDB" id="9802264at2"/>
<dbReference type="BioCyc" id="MPNE272634:G1GJ3-128-MONOMER"/>
<dbReference type="Proteomes" id="UP000000808">
    <property type="component" value="Chromosome"/>
</dbReference>
<dbReference type="GO" id="GO:0005524">
    <property type="term" value="F:ATP binding"/>
    <property type="evidence" value="ECO:0007669"/>
    <property type="project" value="UniProtKB-KW"/>
</dbReference>
<dbReference type="GO" id="GO:0016887">
    <property type="term" value="F:ATP hydrolysis activity"/>
    <property type="evidence" value="ECO:0007669"/>
    <property type="project" value="InterPro"/>
</dbReference>
<dbReference type="CDD" id="cd03255">
    <property type="entry name" value="ABC_MJ0796_LolCDE_FtsE"/>
    <property type="match status" value="1"/>
</dbReference>
<dbReference type="FunFam" id="3.40.50.300:FF:000032">
    <property type="entry name" value="Export ABC transporter ATP-binding protein"/>
    <property type="match status" value="1"/>
</dbReference>
<dbReference type="Gene3D" id="3.40.50.300">
    <property type="entry name" value="P-loop containing nucleotide triphosphate hydrolases"/>
    <property type="match status" value="1"/>
</dbReference>
<dbReference type="InterPro" id="IPR003593">
    <property type="entry name" value="AAA+_ATPase"/>
</dbReference>
<dbReference type="InterPro" id="IPR003439">
    <property type="entry name" value="ABC_transporter-like_ATP-bd"/>
</dbReference>
<dbReference type="InterPro" id="IPR017871">
    <property type="entry name" value="ABC_transporter-like_CS"/>
</dbReference>
<dbReference type="InterPro" id="IPR017911">
    <property type="entry name" value="MacB-like_ATP-bd"/>
</dbReference>
<dbReference type="InterPro" id="IPR027417">
    <property type="entry name" value="P-loop_NTPase"/>
</dbReference>
<dbReference type="PANTHER" id="PTHR42798:SF2">
    <property type="entry name" value="ABC TRANSPORTER ATP-BINDING PROTEIN MG467-RELATED"/>
    <property type="match status" value="1"/>
</dbReference>
<dbReference type="PANTHER" id="PTHR42798">
    <property type="entry name" value="LIPOPROTEIN-RELEASING SYSTEM ATP-BINDING PROTEIN LOLD"/>
    <property type="match status" value="1"/>
</dbReference>
<dbReference type="Pfam" id="PF00005">
    <property type="entry name" value="ABC_tran"/>
    <property type="match status" value="1"/>
</dbReference>
<dbReference type="SMART" id="SM00382">
    <property type="entry name" value="AAA"/>
    <property type="match status" value="1"/>
</dbReference>
<dbReference type="SUPFAM" id="SSF52540">
    <property type="entry name" value="P-loop containing nucleoside triphosphate hydrolases"/>
    <property type="match status" value="1"/>
</dbReference>
<dbReference type="PROSITE" id="PS00211">
    <property type="entry name" value="ABC_TRANSPORTER_1"/>
    <property type="match status" value="1"/>
</dbReference>
<dbReference type="PROSITE" id="PS50893">
    <property type="entry name" value="ABC_TRANSPORTER_2"/>
    <property type="match status" value="1"/>
</dbReference>
<feature type="chain" id="PRO_0000093240" description="Putative ABC transporter ATP-binding protein MG065 homolog">
    <location>
        <begin position="1"/>
        <end position="465"/>
    </location>
</feature>
<feature type="domain" description="ABC transporter" evidence="1">
    <location>
        <begin position="232"/>
        <end position="465"/>
    </location>
</feature>
<feature type="binding site" evidence="1">
    <location>
        <begin position="268"/>
        <end position="275"/>
    </location>
    <ligand>
        <name>ATP</name>
        <dbReference type="ChEBI" id="CHEBI:30616"/>
    </ligand>
</feature>
<accession>P75612</accession>
<evidence type="ECO:0000255" key="1">
    <source>
        <dbReference type="PROSITE-ProRule" id="PRU00434"/>
    </source>
</evidence>
<evidence type="ECO:0000305" key="2"/>
<sequence>MRYFALTDLTKPTAKFTTDAMELRQISNAYLNQAQAYLQKGLKQLKKDYKNAILYTPKTEYKRFLKWKQTFLQDLNQTQKRFFIVRAQHFSYVLLFNLLDEQVEAVIATFNNFLDEHRLEAQSKQFDLDTAVNELHDYFDQLQKNTAYSEDLPTHLTQKTEQLINARNTQLTNLLNKIATTKPPLNKQQRLLASFRNYHEHLFLKNEVKKVTWLNEPRAKKESVTPDEEHIIELKNVYKYITNGVTTNAVLKGIDLKLKAHDFIVILGPSGSGKTTLLNIISGMDRPSSGSVVVNGQEMICMNDRQLTNFRRNYVGYIFQQYGLLPNLTVRENVEVGANLQRNPDKRINIDELLEAVGMKHLQKKLPNELSGGQQQRVSIARAFAKNPLLIFGDEPTGALDLEMTQIVLKQFLAIKQRYKTTMVIVTHNNLIAQLADLVIYVADGKIQALQANPNPKQVEDINWI</sequence>